<evidence type="ECO:0000269" key="1">
    <source>
    </source>
</evidence>
<evidence type="ECO:0000305" key="2"/>
<dbReference type="EC" id="4.1.2.56"/>
<dbReference type="EMBL" id="AB259663">
    <property type="protein sequence ID" value="BAF36651.1"/>
    <property type="molecule type" value="Genomic_DNA"/>
</dbReference>
<dbReference type="RefSeq" id="WP_012380462.1">
    <property type="nucleotide sequence ID" value="NZ_UAVD01000056.1"/>
</dbReference>
<dbReference type="SMR" id="A0JC77"/>
<dbReference type="PATRIC" id="fig|455632.4.peg.4329"/>
<dbReference type="OMA" id="CEYWGMP"/>
<dbReference type="OrthoDB" id="9771504at2"/>
<dbReference type="BioCyc" id="MetaCyc:MONOMER-17797"/>
<dbReference type="BRENDA" id="4.1.2.56">
    <property type="organism ID" value="6035"/>
</dbReference>
<dbReference type="SABIO-RK" id="A0JC77"/>
<dbReference type="GO" id="GO:0004332">
    <property type="term" value="F:fructose-bisphosphate aldolase activity"/>
    <property type="evidence" value="ECO:0007669"/>
    <property type="project" value="InterPro"/>
</dbReference>
<dbReference type="GO" id="GO:0008652">
    <property type="term" value="P:amino acid biosynthetic process"/>
    <property type="evidence" value="ECO:0007669"/>
    <property type="project" value="UniProtKB-KW"/>
</dbReference>
<dbReference type="GO" id="GO:0009073">
    <property type="term" value="P:aromatic amino acid family biosynthetic process"/>
    <property type="evidence" value="ECO:0007669"/>
    <property type="project" value="UniProtKB-KW"/>
</dbReference>
<dbReference type="CDD" id="cd00958">
    <property type="entry name" value="DhnA"/>
    <property type="match status" value="1"/>
</dbReference>
<dbReference type="Gene3D" id="3.20.20.70">
    <property type="entry name" value="Aldolase class I"/>
    <property type="match status" value="1"/>
</dbReference>
<dbReference type="InterPro" id="IPR013785">
    <property type="entry name" value="Aldolase_TIM"/>
</dbReference>
<dbReference type="InterPro" id="IPR002915">
    <property type="entry name" value="DeoC/FbaB/LacD_aldolase"/>
</dbReference>
<dbReference type="InterPro" id="IPR050456">
    <property type="entry name" value="DeoC/FbaB_aldolase"/>
</dbReference>
<dbReference type="InterPro" id="IPR041720">
    <property type="entry name" value="FbaB-like"/>
</dbReference>
<dbReference type="NCBIfam" id="NF005556">
    <property type="entry name" value="PRK07226.1"/>
    <property type="match status" value="1"/>
</dbReference>
<dbReference type="PANTHER" id="PTHR47916:SF1">
    <property type="entry name" value="3-HYDROXY-5-PHOSPHONOOXYPENTANE-2,4-DIONE THIOLASE"/>
    <property type="match status" value="1"/>
</dbReference>
<dbReference type="PANTHER" id="PTHR47916">
    <property type="entry name" value="FRUCTOSE-BISPHOSPHATE ALDOLASE CLASS 1"/>
    <property type="match status" value="1"/>
</dbReference>
<dbReference type="Pfam" id="PF01791">
    <property type="entry name" value="DeoC"/>
    <property type="match status" value="1"/>
</dbReference>
<dbReference type="PIRSF" id="PIRSF038992">
    <property type="entry name" value="Aldolase_Ia"/>
    <property type="match status" value="1"/>
</dbReference>
<dbReference type="SMART" id="SM01133">
    <property type="entry name" value="DeoC"/>
    <property type="match status" value="1"/>
</dbReference>
<dbReference type="SUPFAM" id="SSF51569">
    <property type="entry name" value="Aldolase"/>
    <property type="match status" value="1"/>
</dbReference>
<protein>
    <recommendedName>
        <fullName>2-amino-4,5-dihydroxy-6-oxo-7-(phosphonooxy)heptanoate synthase</fullName>
        <ecNumber>4.1.2.56</ecNumber>
    </recommendedName>
</protein>
<reference key="1">
    <citation type="journal article" date="2006" name="J. Biol. Chem.">
        <title>Novel benzene ring biosynthesis from C(3) and C(4) primary metabolites by two enzymes.</title>
        <authorList>
            <person name="Suzuki H."/>
            <person name="Ohnishi Y."/>
            <person name="Furusho Y."/>
            <person name="Sakuda S."/>
            <person name="Horinouchi S."/>
        </authorList>
    </citation>
    <scope>NUCLEOTIDE SEQUENCE [GENOMIC DNA]</scope>
    <scope>FUNCTION</scope>
    <scope>CATALYTIC ACTIVITY</scope>
    <scope>BIOPHYSICOCHEMICAL PROPERTIES</scope>
    <scope>SUBUNIT</scope>
    <source>
        <strain>IFO 13350</strain>
    </source>
</reference>
<feature type="chain" id="PRO_0000361267" description="2-amino-4,5-dihydroxy-6-oxo-7-(phosphonooxy)heptanoate synthase">
    <location>
        <begin position="1"/>
        <end position="274"/>
    </location>
</feature>
<gene>
    <name type="primary">griI</name>
</gene>
<organism>
    <name type="scientific">Streptomyces griseus</name>
    <dbReference type="NCBI Taxonomy" id="1911"/>
    <lineage>
        <taxon>Bacteria</taxon>
        <taxon>Bacillati</taxon>
        <taxon>Actinomycetota</taxon>
        <taxon>Actinomycetes</taxon>
        <taxon>Kitasatosporales</taxon>
        <taxon>Streptomycetaceae</taxon>
        <taxon>Streptomyces</taxon>
    </lineage>
</organism>
<name>GRII_STRGR</name>
<sequence>MAPNAPFARSLRLQRLHHHDPDRLFIVPLDHSITDGPLSRAHRLDPLVGELASHHVDGIVLHKGSLRHVDPEWFTRTSLIVHLSASTVHAPDPNAKYLVSSVEESLRMGADAVSVHVNLGSEGERHQIADMAAVAEACDRWNVPLLAMMYPRGPKIDDPRDPALVAHAVQVAVDLGADLVKTLYVGSVAAMAEITAASPVPVVVVGGPRDSDESRILAYVDDALRGGAAGVAMGRNVFQAPDPGAMADKLSDLIHNSGTRGAARAPAGAAAGAA</sequence>
<keyword id="KW-0028">Amino-acid biosynthesis</keyword>
<keyword id="KW-0057">Aromatic amino acid biosynthesis</keyword>
<keyword id="KW-0456">Lyase</keyword>
<accession>A0JC77</accession>
<comment type="function">
    <text evidence="1">Catalyzes aldol condensation between L-aspartate-4-semialdehyde (ASA) and dihydroxyacetone phosphate (DHAP), to form 2-amino-4,5-dihydroxy-6-oxo-7-(phosphonooxy)heptanoate.</text>
</comment>
<comment type="catalytic activity">
    <reaction evidence="1">
        <text>2-amino-4,5-dihydroxy-6-oxo-7-(phosphooxy)heptanoate = L-aspartate 4-semialdehyde + dihydroxyacetone phosphate</text>
        <dbReference type="Rhea" id="RHEA:26313"/>
        <dbReference type="ChEBI" id="CHEBI:57642"/>
        <dbReference type="ChEBI" id="CHEBI:58898"/>
        <dbReference type="ChEBI" id="CHEBI:537519"/>
        <dbReference type="EC" id="4.1.2.56"/>
    </reaction>
</comment>
<comment type="biophysicochemical properties">
    <kinetics>
        <KM evidence="1">5.6 uM for L-aspartate-4-semialdehyde (at 30 degrees Celsius)</KM>
        <KM evidence="1">140 uM for dihydroxyacetone phosphate (at 30 degrees Celsius)</KM>
    </kinetics>
    <phDependence>
        <text evidence="1">Optimum pH is 6.5-10.0.</text>
    </phDependence>
    <temperatureDependence>
        <text evidence="1">Optimum temperature is 40 degrees Celsius.</text>
    </temperatureDependence>
</comment>
<comment type="subunit">
    <text evidence="1">Homodecamer.</text>
</comment>
<comment type="miscellaneous">
    <text>2-amino-4,5-dihydroxy-6-one-heptanoic acid-7-phosphate can be converted to 5-acetyl-1H-pyrrole-2-carboxylic acid (5,2-APC) by a non-enzymatic reaction.</text>
</comment>
<comment type="similarity">
    <text evidence="2">Belongs to the DeoC/FbaB aldolase family. GriI subfamily.</text>
</comment>
<proteinExistence type="evidence at protein level"/>